<feature type="initiator methionine" description="Removed" evidence="1">
    <location>
        <position position="1"/>
    </location>
</feature>
<feature type="chain" id="PRO_0000135418" description="Glutamine--fructose-6-phosphate aminotransferase [isomerizing]">
    <location>
        <begin position="2"/>
        <end position="609"/>
    </location>
</feature>
<feature type="domain" description="Glutamine amidotransferase type-2" evidence="1">
    <location>
        <begin position="2"/>
        <end position="218"/>
    </location>
</feature>
<feature type="domain" description="SIS 1" evidence="1">
    <location>
        <begin position="286"/>
        <end position="426"/>
    </location>
</feature>
<feature type="domain" description="SIS 2" evidence="1">
    <location>
        <begin position="458"/>
        <end position="599"/>
    </location>
</feature>
<feature type="active site" description="Nucleophile; for GATase activity" evidence="1">
    <location>
        <position position="2"/>
    </location>
</feature>
<feature type="active site" description="For Fru-6P isomerization activity" evidence="1">
    <location>
        <position position="604"/>
    </location>
</feature>
<gene>
    <name evidence="1" type="primary">glmS</name>
    <name type="ordered locus">YPO4118</name>
    <name type="ordered locus">y4132</name>
    <name type="ordered locus">YP_4025</name>
</gene>
<comment type="function">
    <text evidence="1">Catalyzes the first step in hexosamine metabolism, converting fructose-6P into glucosamine-6P using glutamine as a nitrogen source.</text>
</comment>
<comment type="catalytic activity">
    <reaction evidence="1">
        <text>D-fructose 6-phosphate + L-glutamine = D-glucosamine 6-phosphate + L-glutamate</text>
        <dbReference type="Rhea" id="RHEA:13237"/>
        <dbReference type="ChEBI" id="CHEBI:29985"/>
        <dbReference type="ChEBI" id="CHEBI:58359"/>
        <dbReference type="ChEBI" id="CHEBI:58725"/>
        <dbReference type="ChEBI" id="CHEBI:61527"/>
        <dbReference type="EC" id="2.6.1.16"/>
    </reaction>
</comment>
<comment type="subunit">
    <text evidence="1">Homodimer.</text>
</comment>
<comment type="subcellular location">
    <subcellularLocation>
        <location evidence="1">Cytoplasm</location>
    </subcellularLocation>
</comment>
<name>GLMS_YERPE</name>
<sequence length="609" mass="66525">MCGIVGAVAQRDIAEILIEGLRRLEYRGYDSAGLAVVDSEGHLTRLRRVGKVHALSDAAEKQDLHGGTGIAHTRWATHGEPSEANAHPHVSDYISVVHNGIIENHEPLRELLISRGYRFSSETDTEVIAHLVHWEQQQGGSLLEVVKRVIPQLRGAYGTVVMDSRDPSRLIAARSGSPLVIGCGVGENFIASDQLALLPVTRRFIFLEEGDVVEVTRRSISIFDKQGNAIERPEIESQVQYDAGDKGIYRHYMQKEIYEQPMAIKNTLEGRLSHGMIDLSELGPKADALLAEVQHIQIIACGTSYNSGMVSRYWFESLAGVPCDVEIASEFRYRKSAVRPNSLLITLSQSGETADTLAALRLSKELGYLGSLAICNVAGSSLVRESDLALMTKAGTEIGVASTKAFTTQLTVLLMLVGRIGKLKGADASLEHDIVHALQALPARIEQMLSLDKTIEALAEGFSDKHHALFLGRGDQYPIAMEGALKLKEISYIHAEAYAAGELKHGPLALIDADMPVIVVAPNNELLEKLKSNIEEVRARGGLLYVFADQDAGFTDSEGMKIIQLPHVEEIIAPIFYTVPLQLLSYHVALIKGTDVDQPRNLAKSVTVE</sequence>
<protein>
    <recommendedName>
        <fullName evidence="1">Glutamine--fructose-6-phosphate aminotransferase [isomerizing]</fullName>
        <ecNumber evidence="1">2.6.1.16</ecNumber>
    </recommendedName>
    <alternativeName>
        <fullName evidence="1">D-fructose-6-phosphate amidotransferase</fullName>
    </alternativeName>
    <alternativeName>
        <fullName evidence="1">GFAT</fullName>
    </alternativeName>
    <alternativeName>
        <fullName evidence="1">Glucosamine-6-phosphate synthase</fullName>
    </alternativeName>
    <alternativeName>
        <fullName evidence="1">Hexosephosphate aminotransferase</fullName>
    </alternativeName>
    <alternativeName>
        <fullName evidence="1">L-glutamine--D-fructose-6-phosphate amidotransferase</fullName>
    </alternativeName>
</protein>
<evidence type="ECO:0000255" key="1">
    <source>
        <dbReference type="HAMAP-Rule" id="MF_00164"/>
    </source>
</evidence>
<reference key="1">
    <citation type="journal article" date="2001" name="Nature">
        <title>Genome sequence of Yersinia pestis, the causative agent of plague.</title>
        <authorList>
            <person name="Parkhill J."/>
            <person name="Wren B.W."/>
            <person name="Thomson N.R."/>
            <person name="Titball R.W."/>
            <person name="Holden M.T.G."/>
            <person name="Prentice M.B."/>
            <person name="Sebaihia M."/>
            <person name="James K.D."/>
            <person name="Churcher C.M."/>
            <person name="Mungall K.L."/>
            <person name="Baker S."/>
            <person name="Basham D."/>
            <person name="Bentley S.D."/>
            <person name="Brooks K."/>
            <person name="Cerdeno-Tarraga A.-M."/>
            <person name="Chillingworth T."/>
            <person name="Cronin A."/>
            <person name="Davies R.M."/>
            <person name="Davis P."/>
            <person name="Dougan G."/>
            <person name="Feltwell T."/>
            <person name="Hamlin N."/>
            <person name="Holroyd S."/>
            <person name="Jagels K."/>
            <person name="Karlyshev A.V."/>
            <person name="Leather S."/>
            <person name="Moule S."/>
            <person name="Oyston P.C.F."/>
            <person name="Quail M.A."/>
            <person name="Rutherford K.M."/>
            <person name="Simmonds M."/>
            <person name="Skelton J."/>
            <person name="Stevens K."/>
            <person name="Whitehead S."/>
            <person name="Barrell B.G."/>
        </authorList>
    </citation>
    <scope>NUCLEOTIDE SEQUENCE [LARGE SCALE GENOMIC DNA]</scope>
    <source>
        <strain>CO-92 / Biovar Orientalis</strain>
    </source>
</reference>
<reference key="2">
    <citation type="journal article" date="2002" name="J. Bacteriol.">
        <title>Genome sequence of Yersinia pestis KIM.</title>
        <authorList>
            <person name="Deng W."/>
            <person name="Burland V."/>
            <person name="Plunkett G. III"/>
            <person name="Boutin A."/>
            <person name="Mayhew G.F."/>
            <person name="Liss P."/>
            <person name="Perna N.T."/>
            <person name="Rose D.J."/>
            <person name="Mau B."/>
            <person name="Zhou S."/>
            <person name="Schwartz D.C."/>
            <person name="Fetherston J.D."/>
            <person name="Lindler L.E."/>
            <person name="Brubaker R.R."/>
            <person name="Plano G.V."/>
            <person name="Straley S.C."/>
            <person name="McDonough K.A."/>
            <person name="Nilles M.L."/>
            <person name="Matson J.S."/>
            <person name="Blattner F.R."/>
            <person name="Perry R.D."/>
        </authorList>
    </citation>
    <scope>NUCLEOTIDE SEQUENCE [LARGE SCALE GENOMIC DNA]</scope>
    <source>
        <strain>KIM10+ / Biovar Mediaevalis</strain>
    </source>
</reference>
<reference key="3">
    <citation type="journal article" date="2004" name="DNA Res.">
        <title>Complete genome sequence of Yersinia pestis strain 91001, an isolate avirulent to humans.</title>
        <authorList>
            <person name="Song Y."/>
            <person name="Tong Z."/>
            <person name="Wang J."/>
            <person name="Wang L."/>
            <person name="Guo Z."/>
            <person name="Han Y."/>
            <person name="Zhang J."/>
            <person name="Pei D."/>
            <person name="Zhou D."/>
            <person name="Qin H."/>
            <person name="Pang X."/>
            <person name="Han Y."/>
            <person name="Zhai J."/>
            <person name="Li M."/>
            <person name="Cui B."/>
            <person name="Qi Z."/>
            <person name="Jin L."/>
            <person name="Dai R."/>
            <person name="Chen F."/>
            <person name="Li S."/>
            <person name="Ye C."/>
            <person name="Du Z."/>
            <person name="Lin W."/>
            <person name="Wang J."/>
            <person name="Yu J."/>
            <person name="Yang H."/>
            <person name="Wang J."/>
            <person name="Huang P."/>
            <person name="Yang R."/>
        </authorList>
    </citation>
    <scope>NUCLEOTIDE SEQUENCE [LARGE SCALE GENOMIC DNA]</scope>
    <source>
        <strain>91001 / Biovar Mediaevalis</strain>
    </source>
</reference>
<keyword id="KW-0032">Aminotransferase</keyword>
<keyword id="KW-0963">Cytoplasm</keyword>
<keyword id="KW-0315">Glutamine amidotransferase</keyword>
<keyword id="KW-1185">Reference proteome</keyword>
<keyword id="KW-0677">Repeat</keyword>
<keyword id="KW-0808">Transferase</keyword>
<dbReference type="EC" id="2.6.1.16" evidence="1"/>
<dbReference type="EMBL" id="AL590842">
    <property type="protein sequence ID" value="CAL22686.1"/>
    <property type="molecule type" value="Genomic_DNA"/>
</dbReference>
<dbReference type="EMBL" id="AE009952">
    <property type="protein sequence ID" value="AAM87674.1"/>
    <property type="molecule type" value="Genomic_DNA"/>
</dbReference>
<dbReference type="EMBL" id="AE017042">
    <property type="protein sequence ID" value="AAS64164.1"/>
    <property type="molecule type" value="Genomic_DNA"/>
</dbReference>
<dbReference type="PIR" id="AB0500">
    <property type="entry name" value="AB0500"/>
</dbReference>
<dbReference type="RefSeq" id="WP_002215552.1">
    <property type="nucleotide sequence ID" value="NZ_WUCM01000028.1"/>
</dbReference>
<dbReference type="RefSeq" id="YP_002348969.1">
    <property type="nucleotide sequence ID" value="NC_003143.1"/>
</dbReference>
<dbReference type="SMR" id="Q8Z9S8"/>
<dbReference type="IntAct" id="Q8Z9S8">
    <property type="interactions" value="1"/>
</dbReference>
<dbReference type="STRING" id="214092.YPO4118"/>
<dbReference type="PaxDb" id="214092-YPO4118"/>
<dbReference type="EnsemblBacteria" id="AAS64164">
    <property type="protein sequence ID" value="AAS64164"/>
    <property type="gene ID" value="YP_4025"/>
</dbReference>
<dbReference type="GeneID" id="57974606"/>
<dbReference type="KEGG" id="ype:YPO4118"/>
<dbReference type="KEGG" id="ypk:y4132"/>
<dbReference type="KEGG" id="ypm:YP_4025"/>
<dbReference type="PATRIC" id="fig|214092.21.peg.4662"/>
<dbReference type="eggNOG" id="COG0449">
    <property type="taxonomic scope" value="Bacteria"/>
</dbReference>
<dbReference type="HOGENOM" id="CLU_012520_5_2_6"/>
<dbReference type="OMA" id="ASEYRYA"/>
<dbReference type="OrthoDB" id="9761808at2"/>
<dbReference type="Proteomes" id="UP000000815">
    <property type="component" value="Chromosome"/>
</dbReference>
<dbReference type="Proteomes" id="UP000001019">
    <property type="component" value="Chromosome"/>
</dbReference>
<dbReference type="Proteomes" id="UP000002490">
    <property type="component" value="Chromosome"/>
</dbReference>
<dbReference type="GO" id="GO:0005829">
    <property type="term" value="C:cytosol"/>
    <property type="evidence" value="ECO:0000318"/>
    <property type="project" value="GO_Central"/>
</dbReference>
<dbReference type="GO" id="GO:0097367">
    <property type="term" value="F:carbohydrate derivative binding"/>
    <property type="evidence" value="ECO:0007669"/>
    <property type="project" value="InterPro"/>
</dbReference>
<dbReference type="GO" id="GO:0004360">
    <property type="term" value="F:glutamine-fructose-6-phosphate transaminase (isomerizing) activity"/>
    <property type="evidence" value="ECO:0000318"/>
    <property type="project" value="GO_Central"/>
</dbReference>
<dbReference type="GO" id="GO:0005975">
    <property type="term" value="P:carbohydrate metabolic process"/>
    <property type="evidence" value="ECO:0007669"/>
    <property type="project" value="UniProtKB-UniRule"/>
</dbReference>
<dbReference type="GO" id="GO:0006002">
    <property type="term" value="P:fructose 6-phosphate metabolic process"/>
    <property type="evidence" value="ECO:0000318"/>
    <property type="project" value="GO_Central"/>
</dbReference>
<dbReference type="GO" id="GO:0006487">
    <property type="term" value="P:protein N-linked glycosylation"/>
    <property type="evidence" value="ECO:0000318"/>
    <property type="project" value="GO_Central"/>
</dbReference>
<dbReference type="GO" id="GO:0006047">
    <property type="term" value="P:UDP-N-acetylglucosamine metabolic process"/>
    <property type="evidence" value="ECO:0000318"/>
    <property type="project" value="GO_Central"/>
</dbReference>
<dbReference type="CDD" id="cd00714">
    <property type="entry name" value="GFAT"/>
    <property type="match status" value="1"/>
</dbReference>
<dbReference type="CDD" id="cd05008">
    <property type="entry name" value="SIS_GlmS_GlmD_1"/>
    <property type="match status" value="1"/>
</dbReference>
<dbReference type="CDD" id="cd05009">
    <property type="entry name" value="SIS_GlmS_GlmD_2"/>
    <property type="match status" value="1"/>
</dbReference>
<dbReference type="FunFam" id="3.40.50.10490:FF:000001">
    <property type="entry name" value="Glutamine--fructose-6-phosphate aminotransferase [isomerizing]"/>
    <property type="match status" value="1"/>
</dbReference>
<dbReference type="FunFam" id="3.40.50.10490:FF:000002">
    <property type="entry name" value="Glutamine--fructose-6-phosphate aminotransferase [isomerizing]"/>
    <property type="match status" value="1"/>
</dbReference>
<dbReference type="FunFam" id="3.60.20.10:FF:000006">
    <property type="entry name" value="Glutamine--fructose-6-phosphate aminotransferase [isomerizing]"/>
    <property type="match status" value="1"/>
</dbReference>
<dbReference type="Gene3D" id="3.40.50.10490">
    <property type="entry name" value="Glucose-6-phosphate isomerase like protein, domain 1"/>
    <property type="match status" value="2"/>
</dbReference>
<dbReference type="Gene3D" id="3.60.20.10">
    <property type="entry name" value="Glutamine Phosphoribosylpyrophosphate, subunit 1, domain 1"/>
    <property type="match status" value="1"/>
</dbReference>
<dbReference type="HAMAP" id="MF_00164">
    <property type="entry name" value="GlmS"/>
    <property type="match status" value="1"/>
</dbReference>
<dbReference type="InterPro" id="IPR017932">
    <property type="entry name" value="GATase_2_dom"/>
</dbReference>
<dbReference type="InterPro" id="IPR005855">
    <property type="entry name" value="GFAT"/>
</dbReference>
<dbReference type="InterPro" id="IPR047084">
    <property type="entry name" value="GFAT_N"/>
</dbReference>
<dbReference type="InterPro" id="IPR035466">
    <property type="entry name" value="GlmS/AgaS_SIS"/>
</dbReference>
<dbReference type="InterPro" id="IPR035490">
    <property type="entry name" value="GlmS/FrlB_SIS"/>
</dbReference>
<dbReference type="InterPro" id="IPR029055">
    <property type="entry name" value="Ntn_hydrolases_N"/>
</dbReference>
<dbReference type="InterPro" id="IPR001347">
    <property type="entry name" value="SIS_dom"/>
</dbReference>
<dbReference type="InterPro" id="IPR046348">
    <property type="entry name" value="SIS_dom_sf"/>
</dbReference>
<dbReference type="NCBIfam" id="TIGR01135">
    <property type="entry name" value="glmS"/>
    <property type="match status" value="1"/>
</dbReference>
<dbReference type="NCBIfam" id="NF001484">
    <property type="entry name" value="PRK00331.1"/>
    <property type="match status" value="1"/>
</dbReference>
<dbReference type="PANTHER" id="PTHR10937">
    <property type="entry name" value="GLUCOSAMINE--FRUCTOSE-6-PHOSPHATE AMINOTRANSFERASE, ISOMERIZING"/>
    <property type="match status" value="1"/>
</dbReference>
<dbReference type="PANTHER" id="PTHR10937:SF0">
    <property type="entry name" value="GLUTAMINE--FRUCTOSE-6-PHOSPHATE TRANSAMINASE (ISOMERIZING)"/>
    <property type="match status" value="1"/>
</dbReference>
<dbReference type="Pfam" id="PF13522">
    <property type="entry name" value="GATase_6"/>
    <property type="match status" value="1"/>
</dbReference>
<dbReference type="Pfam" id="PF01380">
    <property type="entry name" value="SIS"/>
    <property type="match status" value="2"/>
</dbReference>
<dbReference type="SUPFAM" id="SSF56235">
    <property type="entry name" value="N-terminal nucleophile aminohydrolases (Ntn hydrolases)"/>
    <property type="match status" value="1"/>
</dbReference>
<dbReference type="SUPFAM" id="SSF53697">
    <property type="entry name" value="SIS domain"/>
    <property type="match status" value="1"/>
</dbReference>
<dbReference type="PROSITE" id="PS51278">
    <property type="entry name" value="GATASE_TYPE_2"/>
    <property type="match status" value="1"/>
</dbReference>
<dbReference type="PROSITE" id="PS51464">
    <property type="entry name" value="SIS"/>
    <property type="match status" value="2"/>
</dbReference>
<accession>Q8Z9S8</accession>
<accession>Q0W9R9</accession>
<organism>
    <name type="scientific">Yersinia pestis</name>
    <dbReference type="NCBI Taxonomy" id="632"/>
    <lineage>
        <taxon>Bacteria</taxon>
        <taxon>Pseudomonadati</taxon>
        <taxon>Pseudomonadota</taxon>
        <taxon>Gammaproteobacteria</taxon>
        <taxon>Enterobacterales</taxon>
        <taxon>Yersiniaceae</taxon>
        <taxon>Yersinia</taxon>
    </lineage>
</organism>
<proteinExistence type="inferred from homology"/>